<accession>Q49LR9</accession>
<gene>
    <name evidence="2" type="primary">XKR9</name>
    <name evidence="4" type="synonym">XRG9</name>
</gene>
<keyword id="KW-0053">Apoptosis</keyword>
<keyword id="KW-1003">Cell membrane</keyword>
<keyword id="KW-0472">Membrane</keyword>
<keyword id="KW-1185">Reference proteome</keyword>
<keyword id="KW-0812">Transmembrane</keyword>
<keyword id="KW-1133">Transmembrane helix</keyword>
<dbReference type="EMBL" id="AY702912">
    <property type="protein sequence ID" value="AAV83785.1"/>
    <property type="molecule type" value="mRNA"/>
</dbReference>
<dbReference type="RefSeq" id="NP_001028210.1">
    <property type="nucleotide sequence ID" value="NM_001033038.1"/>
</dbReference>
<dbReference type="RefSeq" id="XP_009453610.1">
    <property type="nucleotide sequence ID" value="XM_009455335.2"/>
</dbReference>
<dbReference type="RefSeq" id="XP_063672144.1">
    <property type="nucleotide sequence ID" value="XM_063816074.1"/>
</dbReference>
<dbReference type="RefSeq" id="XP_063672145.1">
    <property type="nucleotide sequence ID" value="XM_063816075.1"/>
</dbReference>
<dbReference type="RefSeq" id="XP_063672146.1">
    <property type="nucleotide sequence ID" value="XM_063816076.1"/>
</dbReference>
<dbReference type="RefSeq" id="XP_063672147.1">
    <property type="nucleotide sequence ID" value="XM_063816077.1"/>
</dbReference>
<dbReference type="SMR" id="Q49LR9"/>
<dbReference type="FunCoup" id="Q49LR9">
    <property type="interactions" value="530"/>
</dbReference>
<dbReference type="STRING" id="9598.ENSPTRP00000053139"/>
<dbReference type="PaxDb" id="9598-ENSPTRP00000053139"/>
<dbReference type="Ensembl" id="ENSPTRT00000059886.4">
    <property type="protein sequence ID" value="ENSPTRP00000053139.3"/>
    <property type="gene ID" value="ENSPTRG00000030985.4"/>
</dbReference>
<dbReference type="GeneID" id="613219"/>
<dbReference type="CTD" id="389668"/>
<dbReference type="VGNC" id="VGNC:2451">
    <property type="gene designation" value="XKR9"/>
</dbReference>
<dbReference type="eggNOG" id="KOG4790">
    <property type="taxonomic scope" value="Eukaryota"/>
</dbReference>
<dbReference type="GeneTree" id="ENSGT01110000267146"/>
<dbReference type="HOGENOM" id="CLU_028534_2_0_1"/>
<dbReference type="InParanoid" id="Q49LR9"/>
<dbReference type="OMA" id="RDCRMKY"/>
<dbReference type="TreeFam" id="TF316454"/>
<dbReference type="Proteomes" id="UP000002277">
    <property type="component" value="Chromosome 8"/>
</dbReference>
<dbReference type="Bgee" id="ENSPTRG00000030985">
    <property type="expression patterns" value="Expressed in testis and 5 other cell types or tissues"/>
</dbReference>
<dbReference type="GO" id="GO:0016020">
    <property type="term" value="C:membrane"/>
    <property type="evidence" value="ECO:0000318"/>
    <property type="project" value="GO_Central"/>
</dbReference>
<dbReference type="GO" id="GO:0005886">
    <property type="term" value="C:plasma membrane"/>
    <property type="evidence" value="ECO:0007669"/>
    <property type="project" value="UniProtKB-SubCell"/>
</dbReference>
<dbReference type="GO" id="GO:0006915">
    <property type="term" value="P:apoptotic process"/>
    <property type="evidence" value="ECO:0007669"/>
    <property type="project" value="UniProtKB-KW"/>
</dbReference>
<dbReference type="InterPro" id="IPR018629">
    <property type="entry name" value="XK-rel"/>
</dbReference>
<dbReference type="InterPro" id="IPR050895">
    <property type="entry name" value="XK-related_scramblase"/>
</dbReference>
<dbReference type="PANTHER" id="PTHR16024">
    <property type="entry name" value="XK-RELATED PROTEIN"/>
    <property type="match status" value="1"/>
</dbReference>
<dbReference type="PANTHER" id="PTHR16024:SF13">
    <property type="entry name" value="XK-RELATED PROTEIN 9"/>
    <property type="match status" value="1"/>
</dbReference>
<dbReference type="Pfam" id="PF09815">
    <property type="entry name" value="XK-related"/>
    <property type="match status" value="1"/>
</dbReference>
<name>XKR9_PANTR</name>
<evidence type="ECO:0000250" key="1">
    <source>
        <dbReference type="UniProtKB" id="Q5GH62"/>
    </source>
</evidence>
<evidence type="ECO:0000250" key="2">
    <source>
        <dbReference type="UniProtKB" id="Q5GH70"/>
    </source>
</evidence>
<evidence type="ECO:0000255" key="3"/>
<evidence type="ECO:0000303" key="4">
    <source ref="1"/>
</evidence>
<evidence type="ECO:0000305" key="5"/>
<feature type="chain" id="PRO_0000190798" description="XK-related protein 9">
    <location>
        <begin position="1"/>
        <end position="373"/>
    </location>
</feature>
<feature type="chain" id="PRO_0000453295" description="XK-related protein 9, processed form" evidence="1">
    <location>
        <begin position="1"/>
        <end position="357"/>
    </location>
</feature>
<feature type="transmembrane region" description="Helical" evidence="3">
    <location>
        <begin position="8"/>
        <end position="28"/>
    </location>
</feature>
<feature type="transmembrane region" description="Helical" evidence="3">
    <location>
        <begin position="38"/>
        <end position="58"/>
    </location>
</feature>
<feature type="transmembrane region" description="Helical" evidence="3">
    <location>
        <begin position="166"/>
        <end position="186"/>
    </location>
</feature>
<feature type="transmembrane region" description="Helical" evidence="3">
    <location>
        <begin position="203"/>
        <end position="223"/>
    </location>
</feature>
<feature type="transmembrane region" description="Helical" evidence="3">
    <location>
        <begin position="224"/>
        <end position="244"/>
    </location>
</feature>
<feature type="transmembrane region" description="Helical" evidence="3">
    <location>
        <begin position="256"/>
        <end position="276"/>
    </location>
</feature>
<feature type="transmembrane region" description="Helical" evidence="3">
    <location>
        <begin position="295"/>
        <end position="315"/>
    </location>
</feature>
<feature type="transmembrane region" description="Helical" evidence="3">
    <location>
        <begin position="318"/>
        <end position="338"/>
    </location>
</feature>
<feature type="site" description="Cleavage; by caspase-3, caspase-6 and caspase-7" evidence="1">
    <location>
        <begin position="357"/>
        <end position="358"/>
    </location>
</feature>
<comment type="function">
    <molecule>XK-related protein 9, processed form</molecule>
    <text evidence="1">Phospholipid scramblase that promotes phosphatidylserine exposure on apoptotic cell surface. Phosphatidylserine is a specific marker only present at the surface of apoptotic cells and acts as a specific signal for engulfment.</text>
</comment>
<comment type="catalytic activity">
    <molecule>XK-related protein 9, processed form</molecule>
    <reaction evidence="1">
        <text>a 1,2-diacyl-sn-glycero-3-phospho-L-serine(in) = a 1,2-diacyl-sn-glycero-3-phospho-L-serine(out)</text>
        <dbReference type="Rhea" id="RHEA:38663"/>
        <dbReference type="ChEBI" id="CHEBI:57262"/>
    </reaction>
</comment>
<comment type="activity regulation">
    <text evidence="1">Activated upon caspase cleavage to generate the XK-related protein 9, processed form. Does not act prior the onset of apoptosis.</text>
</comment>
<comment type="subcellular location">
    <subcellularLocation>
        <location evidence="1">Cell membrane</location>
        <topology evidence="3">Multi-pass membrane protein</topology>
    </subcellularLocation>
</comment>
<comment type="PTM">
    <molecule>XK-related protein 9</molecule>
    <text evidence="1">Undergoes proteolytic processing by caspase-3 (CASP3), caspase-6 (CASP6) and caspase-7 (CASP7) to generate the XK-related protein 9, processed form, leading to its activation.</text>
</comment>
<comment type="similarity">
    <text evidence="5">Belongs to the XK family.</text>
</comment>
<proteinExistence type="evidence at transcript level"/>
<reference key="1">
    <citation type="submission" date="2004-07" db="EMBL/GenBank/DDBJ databases">
        <title>A superfamily of XK-related genes (XRG) widely expressed in vertebrates and invertebrates.</title>
        <authorList>
            <person name="Huang C.-H."/>
            <person name="Chen Y."/>
        </authorList>
    </citation>
    <scope>NUCLEOTIDE SEQUENCE [MRNA]</scope>
</reference>
<protein>
    <recommendedName>
        <fullName evidence="5">XK-related protein 9</fullName>
    </recommendedName>
    <component>
        <recommendedName>
            <fullName evidence="1">XK-related protein 9, processed form</fullName>
        </recommendedName>
    </component>
</protein>
<sequence>MKYTKQNFMMSVLGIIIYVTDLIVDIWVSVRFFHEGQYVFSALALSFMLFGTLVAQCFSYSWFKADLKKAGQESQHCFLLLHCLQGGVFTRYWFALKRGYHAAFKYDSNTSNFVEEQIDLHKEVIDRVTDLSMLRLFETYLEGCPQLILQLYILLEHGQANFSQYAAIMVSCCAISWSTVDYQVALRKSLPDKKLLNGLCPKITYLFYKLFTLLSWMLSVVLLLFLNVKIALFLLLFLWLLGIIWAFKNNTQFCTCISMEFLYRIVVGFILIFTFFNIKGQNTKCPMSCYYIVRVLGTLGILTVFWVCPLNIFNPDYFIPISITIVLTLLLGILFLIVYYGSFHPNRSAETKCDEIDGKPVLRECRMRYFLME</sequence>
<organism>
    <name type="scientific">Pan troglodytes</name>
    <name type="common">Chimpanzee</name>
    <dbReference type="NCBI Taxonomy" id="9598"/>
    <lineage>
        <taxon>Eukaryota</taxon>
        <taxon>Metazoa</taxon>
        <taxon>Chordata</taxon>
        <taxon>Craniata</taxon>
        <taxon>Vertebrata</taxon>
        <taxon>Euteleostomi</taxon>
        <taxon>Mammalia</taxon>
        <taxon>Eutheria</taxon>
        <taxon>Euarchontoglires</taxon>
        <taxon>Primates</taxon>
        <taxon>Haplorrhini</taxon>
        <taxon>Catarrhini</taxon>
        <taxon>Hominidae</taxon>
        <taxon>Pan</taxon>
    </lineage>
</organism>